<keyword id="KW-1003">Cell membrane</keyword>
<keyword id="KW-0966">Cell projection</keyword>
<keyword id="KW-0868">Chloride</keyword>
<keyword id="KW-0869">Chloride channel</keyword>
<keyword id="KW-0963">Cytoplasm</keyword>
<keyword id="KW-0225">Disease variant</keyword>
<keyword id="KW-1015">Disulfide bond</keyword>
<keyword id="KW-0325">Glycoprotein</keyword>
<keyword id="KW-0407">Ion channel</keyword>
<keyword id="KW-0406">Ion transport</keyword>
<keyword id="KW-1071">Ligand-gated ion channel</keyword>
<keyword id="KW-0472">Membrane</keyword>
<keyword id="KW-0597">Phosphoprotein</keyword>
<keyword id="KW-0628">Postsynaptic cell membrane</keyword>
<keyword id="KW-0675">Receptor</keyword>
<keyword id="KW-1185">Reference proteome</keyword>
<keyword id="KW-0732">Signal</keyword>
<keyword id="KW-0770">Synapse</keyword>
<keyword id="KW-0812">Transmembrane</keyword>
<keyword id="KW-1133">Transmembrane helix</keyword>
<keyword id="KW-0813">Transport</keyword>
<proteinExistence type="evidence at protein level"/>
<protein>
    <recommendedName>
        <fullName>Glycine receptor subunit beta</fullName>
    </recommendedName>
    <alternativeName>
        <fullName>Glycine receptor 58 kDa subunit</fullName>
    </alternativeName>
</protein>
<comment type="function">
    <text evidence="4 7 8">Subunit of heteromeric glycine-gated chloride channels. Plays an important role in the down-regulation of neuronal excitability. Contributes to the generation of inhibitory postsynaptic currents (PubMed:12809985, PubMed:16672662).</text>
</comment>
<comment type="catalytic activity">
    <reaction evidence="4">
        <text>chloride(in) = chloride(out)</text>
        <dbReference type="Rhea" id="RHEA:29823"/>
        <dbReference type="ChEBI" id="CHEBI:17996"/>
    </reaction>
</comment>
<comment type="activity regulation">
    <text evidence="4 7">Channel opening is triggered by extracellular glycine (PubMed:12809985). Heteropentameric channels composed of GLRB and GLRA1 are activated by lower glycine levels than homopentameric GLRA1 (By similarity).</text>
</comment>
<comment type="subunit">
    <text evidence="4">Forms heteropentamers with glycin receptor alpha subunits. Heteropentamers with GLRA1 can be composed of two GLRA1 and three GLRB subunits, or three GLRA1 and two GLRB subunits, or four GLRA1 subunits and one GLRB subunit. Forms heteropentamers with GLRA2. Functional GLRB-GLRA2 heteropentamers contain four GLRA2 subunits and one GLRB subunit, although alternative subunit composition cannot be excluded. Forms a heteropentamer with GLRA3. Interacts with GPHN.</text>
</comment>
<comment type="interaction">
    <interactant intactId="EBI-7069198">
        <id>P48168</id>
    </interactant>
    <interactant intactId="EBI-771218">
        <id>Q8BUV3</id>
        <label>Gphn</label>
    </interactant>
    <organismsDiffer>false</organismsDiffer>
    <experiments>4</experiments>
</comment>
<comment type="interaction">
    <interactant intactId="EBI-7069198">
        <id>P48168</id>
    </interactant>
    <interactant intactId="EBI-349317">
        <id>Q03555</id>
        <label>Gphn</label>
    </interactant>
    <organismsDiffer>true</organismsDiffer>
    <experiments>4</experiments>
</comment>
<comment type="subcellular location">
    <subcellularLocation>
        <location evidence="10">Postsynaptic cell membrane</location>
        <topology evidence="3">Multi-pass membrane protein</topology>
    </subcellularLocation>
    <subcellularLocation>
        <location evidence="9 10">Synapse</location>
    </subcellularLocation>
    <subcellularLocation>
        <location evidence="9">Cell projection</location>
        <location evidence="9">Dendrite</location>
    </subcellularLocation>
    <subcellularLocation>
        <location evidence="7">Cell membrane</location>
        <topology evidence="3">Multi-pass membrane protein</topology>
    </subcellularLocation>
    <subcellularLocation>
        <location evidence="4">Cytoplasm</location>
    </subcellularLocation>
    <text evidence="2">Retained in the cytoplasm upon heterologous expression by itself. Coexpression with GPHN promotes expression at the cell membrane. Coexpression with GLRA1, GLRA2 or GLRA3 promotes expression at the cell membrane.</text>
</comment>
<comment type="tissue specificity">
    <text evidence="10 11 12">Detected in spinal cord, brain and brain stem, especially in the periolivary region, spinal nuclei, trigeminal nucleus, medulla oblongata, pons and midbrain. Detected in the inner plexiform layer of the retina (at protein level) (PubMed:22592841). High levels of expression in cortex, hippocampus, thalamus and cerebellum (PubMed:7920630). Detected in spinal cord (PubMed:7946325).</text>
</comment>
<comment type="disease">
    <text evidence="7 8 11">Defects in Glrb cause the spastic condition which is characterized by muscle rigidity, tremors, myoclonic jerks, pronounced startle reaction, abnormal gait and impaired righting ability (PubMed:7920630). Neurons from the ventral horn of the spinal cord display reduced inhibitory postsynaptic currents (PubMed:12809985). Likewise, hypoglossal neurons display a dramatic reduction in the frequency and amplitude of postsynaptic inhibitory currents (PubMed:16672662).</text>
</comment>
<comment type="similarity">
    <text evidence="13">Belongs to the ligand-gated ion channel (TC 1.A.9) family. Glycine receptor (TC 1.A.9.3) subfamily. GLRB sub-subfamily.</text>
</comment>
<accession>P48168</accession>
<accession>Q5U5X3</accession>
<reference key="1">
    <citation type="journal article" date="1994" name="Nat. Genet.">
        <title>Glycine receptor beta-subunit gene mutation in spastic mouse associated with LINE-1 element insertion.</title>
        <authorList>
            <person name="Kingsmore S.F."/>
            <person name="Giros B."/>
            <person name="Suh D."/>
            <person name="Bieniarz M."/>
            <person name="Caron M.G."/>
            <person name="Seldin M.F."/>
        </authorList>
    </citation>
    <scope>NUCLEOTIDE SEQUENCE [MRNA]</scope>
    <scope>DISEASE</scope>
    <scope>TISSUE SPECIFICITY</scope>
    <source>
        <tissue>Brain</tissue>
    </source>
</reference>
<reference key="2">
    <citation type="journal article" date="1994" name="Neuron">
        <title>The spastic mouse: aberrant splicing of glycine receptor beta subunit mRNA caused by intronic insertion of L1 element.</title>
        <authorList>
            <person name="Muelhardt C."/>
            <person name="Fischer M."/>
            <person name="Gass P."/>
            <person name="Simon-Chazottes D."/>
            <person name="Guenet J.-L."/>
            <person name="Kuhse J."/>
            <person name="Betz H."/>
            <person name="Becker C.M."/>
        </authorList>
    </citation>
    <scope>NUCLEOTIDE SEQUENCE [GENOMIC DNA / MRNA]</scope>
    <scope>VARIANTS SPASTIC</scope>
    <scope>TISSUE SPECIFICITY</scope>
    <source>
        <strain>BALB/cJ</strain>
        <strain>C57BL/6J</strain>
        <tissue>Brain</tissue>
        <tissue>Liver</tissue>
    </source>
</reference>
<reference key="3">
    <citation type="journal article" date="2005" name="Science">
        <title>The transcriptional landscape of the mammalian genome.</title>
        <authorList>
            <person name="Carninci P."/>
            <person name="Kasukawa T."/>
            <person name="Katayama S."/>
            <person name="Gough J."/>
            <person name="Frith M.C."/>
            <person name="Maeda N."/>
            <person name="Oyama R."/>
            <person name="Ravasi T."/>
            <person name="Lenhard B."/>
            <person name="Wells C."/>
            <person name="Kodzius R."/>
            <person name="Shimokawa K."/>
            <person name="Bajic V.B."/>
            <person name="Brenner S.E."/>
            <person name="Batalov S."/>
            <person name="Forrest A.R."/>
            <person name="Zavolan M."/>
            <person name="Davis M.J."/>
            <person name="Wilming L.G."/>
            <person name="Aidinis V."/>
            <person name="Allen J.E."/>
            <person name="Ambesi-Impiombato A."/>
            <person name="Apweiler R."/>
            <person name="Aturaliya R.N."/>
            <person name="Bailey T.L."/>
            <person name="Bansal M."/>
            <person name="Baxter L."/>
            <person name="Beisel K.W."/>
            <person name="Bersano T."/>
            <person name="Bono H."/>
            <person name="Chalk A.M."/>
            <person name="Chiu K.P."/>
            <person name="Choudhary V."/>
            <person name="Christoffels A."/>
            <person name="Clutterbuck D.R."/>
            <person name="Crowe M.L."/>
            <person name="Dalla E."/>
            <person name="Dalrymple B.P."/>
            <person name="de Bono B."/>
            <person name="Della Gatta G."/>
            <person name="di Bernardo D."/>
            <person name="Down T."/>
            <person name="Engstrom P."/>
            <person name="Fagiolini M."/>
            <person name="Faulkner G."/>
            <person name="Fletcher C.F."/>
            <person name="Fukushima T."/>
            <person name="Furuno M."/>
            <person name="Futaki S."/>
            <person name="Gariboldi M."/>
            <person name="Georgii-Hemming P."/>
            <person name="Gingeras T.R."/>
            <person name="Gojobori T."/>
            <person name="Green R.E."/>
            <person name="Gustincich S."/>
            <person name="Harbers M."/>
            <person name="Hayashi Y."/>
            <person name="Hensch T.K."/>
            <person name="Hirokawa N."/>
            <person name="Hill D."/>
            <person name="Huminiecki L."/>
            <person name="Iacono M."/>
            <person name="Ikeo K."/>
            <person name="Iwama A."/>
            <person name="Ishikawa T."/>
            <person name="Jakt M."/>
            <person name="Kanapin A."/>
            <person name="Katoh M."/>
            <person name="Kawasawa Y."/>
            <person name="Kelso J."/>
            <person name="Kitamura H."/>
            <person name="Kitano H."/>
            <person name="Kollias G."/>
            <person name="Krishnan S.P."/>
            <person name="Kruger A."/>
            <person name="Kummerfeld S.K."/>
            <person name="Kurochkin I.V."/>
            <person name="Lareau L.F."/>
            <person name="Lazarevic D."/>
            <person name="Lipovich L."/>
            <person name="Liu J."/>
            <person name="Liuni S."/>
            <person name="McWilliam S."/>
            <person name="Madan Babu M."/>
            <person name="Madera M."/>
            <person name="Marchionni L."/>
            <person name="Matsuda H."/>
            <person name="Matsuzawa S."/>
            <person name="Miki H."/>
            <person name="Mignone F."/>
            <person name="Miyake S."/>
            <person name="Morris K."/>
            <person name="Mottagui-Tabar S."/>
            <person name="Mulder N."/>
            <person name="Nakano N."/>
            <person name="Nakauchi H."/>
            <person name="Ng P."/>
            <person name="Nilsson R."/>
            <person name="Nishiguchi S."/>
            <person name="Nishikawa S."/>
            <person name="Nori F."/>
            <person name="Ohara O."/>
            <person name="Okazaki Y."/>
            <person name="Orlando V."/>
            <person name="Pang K.C."/>
            <person name="Pavan W.J."/>
            <person name="Pavesi G."/>
            <person name="Pesole G."/>
            <person name="Petrovsky N."/>
            <person name="Piazza S."/>
            <person name="Reed J."/>
            <person name="Reid J.F."/>
            <person name="Ring B.Z."/>
            <person name="Ringwald M."/>
            <person name="Rost B."/>
            <person name="Ruan Y."/>
            <person name="Salzberg S.L."/>
            <person name="Sandelin A."/>
            <person name="Schneider C."/>
            <person name="Schoenbach C."/>
            <person name="Sekiguchi K."/>
            <person name="Semple C.A."/>
            <person name="Seno S."/>
            <person name="Sessa L."/>
            <person name="Sheng Y."/>
            <person name="Shibata Y."/>
            <person name="Shimada H."/>
            <person name="Shimada K."/>
            <person name="Silva D."/>
            <person name="Sinclair B."/>
            <person name="Sperling S."/>
            <person name="Stupka E."/>
            <person name="Sugiura K."/>
            <person name="Sultana R."/>
            <person name="Takenaka Y."/>
            <person name="Taki K."/>
            <person name="Tammoja K."/>
            <person name="Tan S.L."/>
            <person name="Tang S."/>
            <person name="Taylor M.S."/>
            <person name="Tegner J."/>
            <person name="Teichmann S.A."/>
            <person name="Ueda H.R."/>
            <person name="van Nimwegen E."/>
            <person name="Verardo R."/>
            <person name="Wei C.L."/>
            <person name="Yagi K."/>
            <person name="Yamanishi H."/>
            <person name="Zabarovsky E."/>
            <person name="Zhu S."/>
            <person name="Zimmer A."/>
            <person name="Hide W."/>
            <person name="Bult C."/>
            <person name="Grimmond S.M."/>
            <person name="Teasdale R.D."/>
            <person name="Liu E.T."/>
            <person name="Brusic V."/>
            <person name="Quackenbush J."/>
            <person name="Wahlestedt C."/>
            <person name="Mattick J.S."/>
            <person name="Hume D.A."/>
            <person name="Kai C."/>
            <person name="Sasaki D."/>
            <person name="Tomaru Y."/>
            <person name="Fukuda S."/>
            <person name="Kanamori-Katayama M."/>
            <person name="Suzuki M."/>
            <person name="Aoki J."/>
            <person name="Arakawa T."/>
            <person name="Iida J."/>
            <person name="Imamura K."/>
            <person name="Itoh M."/>
            <person name="Kato T."/>
            <person name="Kawaji H."/>
            <person name="Kawagashira N."/>
            <person name="Kawashima T."/>
            <person name="Kojima M."/>
            <person name="Kondo S."/>
            <person name="Konno H."/>
            <person name="Nakano K."/>
            <person name="Ninomiya N."/>
            <person name="Nishio T."/>
            <person name="Okada M."/>
            <person name="Plessy C."/>
            <person name="Shibata K."/>
            <person name="Shiraki T."/>
            <person name="Suzuki S."/>
            <person name="Tagami M."/>
            <person name="Waki K."/>
            <person name="Watahiki A."/>
            <person name="Okamura-Oho Y."/>
            <person name="Suzuki H."/>
            <person name="Kawai J."/>
            <person name="Hayashizaki Y."/>
        </authorList>
    </citation>
    <scope>NUCLEOTIDE SEQUENCE [LARGE SCALE MRNA]</scope>
    <source>
        <strain>C57BL/6J</strain>
        <tissue>Hippocampus</tissue>
    </source>
</reference>
<reference key="4">
    <citation type="submission" date="2005-09" db="EMBL/GenBank/DDBJ databases">
        <authorList>
            <person name="Mural R.J."/>
            <person name="Adams M.D."/>
            <person name="Myers E.W."/>
            <person name="Smith H.O."/>
            <person name="Venter J.C."/>
        </authorList>
    </citation>
    <scope>NUCLEOTIDE SEQUENCE [LARGE SCALE GENOMIC DNA]</scope>
</reference>
<reference key="5">
    <citation type="journal article" date="2004" name="Genome Res.">
        <title>The status, quality, and expansion of the NIH full-length cDNA project: the Mammalian Gene Collection (MGC).</title>
        <authorList>
            <consortium name="The MGC Project Team"/>
        </authorList>
    </citation>
    <scope>NUCLEOTIDE SEQUENCE [LARGE SCALE MRNA]</scope>
    <source>
        <tissue>Eye</tissue>
    </source>
</reference>
<reference key="6">
    <citation type="journal article" date="2003" name="Neurosci. Lett.">
        <title>Spinal inhibitory synaptic transmission in the glycine receptor mouse mutant spastic.</title>
        <authorList>
            <person name="von Wegerer J."/>
            <person name="Becker K."/>
            <person name="Glockenhammer D."/>
            <person name="Becker C.M."/>
            <person name="Zeilhofer H.U."/>
            <person name="Swandulla D."/>
        </authorList>
    </citation>
    <scope>DISEASE</scope>
    <scope>FUNCTION</scope>
    <scope>ACTIVITY REGULATION</scope>
</reference>
<reference key="7">
    <citation type="journal article" date="2006" name="J. Neurosci.">
        <title>Distinct physiological mechanisms underlie altered glycinergic synaptic transmission in the murine mutants spastic, spasmodic, and oscillator.</title>
        <authorList>
            <person name="Graham B.A."/>
            <person name="Schofield P.R."/>
            <person name="Sah P."/>
            <person name="Margrie T.W."/>
            <person name="Callister R.J."/>
        </authorList>
    </citation>
    <scope>DISEASE</scope>
    <scope>FUNCTION</scope>
</reference>
<reference key="8">
    <citation type="journal article" date="2009" name="Eur. J. Neurosci.">
        <title>Splice-specific roles of glycine receptor alpha3 in the hippocampus.</title>
        <authorList>
            <person name="Eichler S.A."/>
            <person name="Foerstera B."/>
            <person name="Smolinsky B."/>
            <person name="Juettner R."/>
            <person name="Lehmann T.N."/>
            <person name="Faehling M."/>
            <person name="Schwarz G."/>
            <person name="Legendre P."/>
            <person name="Meier J.C."/>
        </authorList>
    </citation>
    <scope>SUBCELLULAR LOCATION</scope>
</reference>
<reference key="9">
    <citation type="journal article" date="2012" name="J. Comp. Neurol.">
        <title>Distribution of the glycine receptor beta-subunit in the mouse CNS as revealed by a novel monoclonal antibody.</title>
        <authorList>
            <person name="Weltzien F."/>
            <person name="Puller C."/>
            <person name="O'Sullivan G.A."/>
            <person name="Paarmann I."/>
            <person name="Betz H."/>
        </authorList>
    </citation>
    <scope>SUBCELLULAR LOCATION</scope>
    <scope>TISSUE SPECIFICITY</scope>
</reference>
<dbReference type="EMBL" id="U09399">
    <property type="protein sequence ID" value="AAA61874.1"/>
    <property type="molecule type" value="mRNA"/>
</dbReference>
<dbReference type="EMBL" id="X81202">
    <property type="protein sequence ID" value="CAA57076.1"/>
    <property type="molecule type" value="mRNA"/>
</dbReference>
<dbReference type="EMBL" id="X81201">
    <property type="protein sequence ID" value="CAA57075.1"/>
    <property type="molecule type" value="Genomic_DNA"/>
</dbReference>
<dbReference type="EMBL" id="L32594">
    <property type="protein sequence ID" value="AAA65966.1"/>
    <property type="molecule type" value="Genomic_DNA"/>
</dbReference>
<dbReference type="EMBL" id="AK083251">
    <property type="protein sequence ID" value="BAC38831.1"/>
    <property type="molecule type" value="mRNA"/>
</dbReference>
<dbReference type="EMBL" id="CH466547">
    <property type="protein sequence ID" value="EDL15445.1"/>
    <property type="molecule type" value="Genomic_DNA"/>
</dbReference>
<dbReference type="EMBL" id="BC037605">
    <property type="protein sequence ID" value="AAH37605.1"/>
    <property type="molecule type" value="mRNA"/>
</dbReference>
<dbReference type="CCDS" id="CCDS17424.1"/>
<dbReference type="PIR" id="S46459">
    <property type="entry name" value="S46459"/>
</dbReference>
<dbReference type="RefSeq" id="NP_001268898.1">
    <property type="nucleotide sequence ID" value="NM_001281969.2"/>
</dbReference>
<dbReference type="RefSeq" id="NP_001332884.1">
    <property type="nucleotide sequence ID" value="NM_001345955.1"/>
</dbReference>
<dbReference type="RefSeq" id="NP_001332885.1">
    <property type="nucleotide sequence ID" value="NM_001345956.1"/>
</dbReference>
<dbReference type="RefSeq" id="NP_001332886.1">
    <property type="nucleotide sequence ID" value="NM_001345957.1"/>
</dbReference>
<dbReference type="RefSeq" id="NP_001332887.1">
    <property type="nucleotide sequence ID" value="NM_001345958.1"/>
</dbReference>
<dbReference type="RefSeq" id="NP_001332888.1">
    <property type="nucleotide sequence ID" value="NM_001345959.1"/>
</dbReference>
<dbReference type="RefSeq" id="NP_001332925.1">
    <property type="nucleotide sequence ID" value="NM_001345996.1"/>
</dbReference>
<dbReference type="RefSeq" id="NP_034428.2">
    <property type="nucleotide sequence ID" value="NM_010298.6"/>
</dbReference>
<dbReference type="SMR" id="P48168"/>
<dbReference type="BioGRID" id="199953">
    <property type="interactions" value="1"/>
</dbReference>
<dbReference type="FunCoup" id="P48168">
    <property type="interactions" value="902"/>
</dbReference>
<dbReference type="IntAct" id="P48168">
    <property type="interactions" value="5"/>
</dbReference>
<dbReference type="MINT" id="P48168"/>
<dbReference type="STRING" id="10090.ENSMUSP00000029654"/>
<dbReference type="GlyConnect" id="2356">
    <property type="glycosylation" value="2 N-Linked glycans (1 site)"/>
</dbReference>
<dbReference type="GlyCosmos" id="P48168">
    <property type="glycosylation" value="2 sites, 2 glycans"/>
</dbReference>
<dbReference type="GlyGen" id="P48168">
    <property type="glycosylation" value="3 sites, 4 N-linked glycans (2 sites), 1 O-linked glycan (1 site)"/>
</dbReference>
<dbReference type="iPTMnet" id="P48168"/>
<dbReference type="PhosphoSitePlus" id="P48168"/>
<dbReference type="PaxDb" id="10090-ENSMUSP00000029654"/>
<dbReference type="ProteomicsDB" id="267458"/>
<dbReference type="Antibodypedia" id="66124">
    <property type="antibodies" value="168 antibodies from 28 providers"/>
</dbReference>
<dbReference type="DNASU" id="14658"/>
<dbReference type="Ensembl" id="ENSMUST00000029654.15">
    <property type="protein sequence ID" value="ENSMUSP00000029654.9"/>
    <property type="gene ID" value="ENSMUSG00000028020.17"/>
</dbReference>
<dbReference type="GeneID" id="14658"/>
<dbReference type="KEGG" id="mmu:14658"/>
<dbReference type="UCSC" id="uc008pog.2">
    <property type="organism name" value="mouse"/>
</dbReference>
<dbReference type="AGR" id="MGI:95751"/>
<dbReference type="CTD" id="2743"/>
<dbReference type="MGI" id="MGI:95751">
    <property type="gene designation" value="Glrb"/>
</dbReference>
<dbReference type="VEuPathDB" id="HostDB:ENSMUSG00000028020"/>
<dbReference type="eggNOG" id="KOG3644">
    <property type="taxonomic scope" value="Eukaryota"/>
</dbReference>
<dbReference type="GeneTree" id="ENSGT00940000156344"/>
<dbReference type="HOGENOM" id="CLU_010920_1_4_1"/>
<dbReference type="InParanoid" id="P48168"/>
<dbReference type="OMA" id="KFFWGIL"/>
<dbReference type="PhylomeDB" id="P48168"/>
<dbReference type="TreeFam" id="TF315453"/>
<dbReference type="Reactome" id="R-MMU-112314">
    <property type="pathway name" value="Neurotransmitter receptors and postsynaptic signal transmission"/>
</dbReference>
<dbReference type="BioGRID-ORCS" id="14658">
    <property type="hits" value="2 hits in 77 CRISPR screens"/>
</dbReference>
<dbReference type="PRO" id="PR:P48168"/>
<dbReference type="Proteomes" id="UP000000589">
    <property type="component" value="Chromosome 3"/>
</dbReference>
<dbReference type="RNAct" id="P48168">
    <property type="molecule type" value="protein"/>
</dbReference>
<dbReference type="Bgee" id="ENSMUSG00000028020">
    <property type="expression patterns" value="Expressed in lateral geniculate body and 215 other cell types or tissues"/>
</dbReference>
<dbReference type="ExpressionAtlas" id="P48168">
    <property type="expression patterns" value="baseline and differential"/>
</dbReference>
<dbReference type="GO" id="GO:0030425">
    <property type="term" value="C:dendrite"/>
    <property type="evidence" value="ECO:0000314"/>
    <property type="project" value="MGI"/>
</dbReference>
<dbReference type="GO" id="GO:0005783">
    <property type="term" value="C:endoplasmic reticulum"/>
    <property type="evidence" value="ECO:0000247"/>
    <property type="project" value="MGI"/>
</dbReference>
<dbReference type="GO" id="GO:0009897">
    <property type="term" value="C:external side of plasma membrane"/>
    <property type="evidence" value="ECO:0000247"/>
    <property type="project" value="MGI"/>
</dbReference>
<dbReference type="GO" id="GO:0098982">
    <property type="term" value="C:GABA-ergic synapse"/>
    <property type="evidence" value="ECO:0000314"/>
    <property type="project" value="MGI"/>
</dbReference>
<dbReference type="GO" id="GO:0016935">
    <property type="term" value="C:glycine-gated chloride channel complex"/>
    <property type="evidence" value="ECO:0000250"/>
    <property type="project" value="UniProtKB"/>
</dbReference>
<dbReference type="GO" id="GO:0098690">
    <property type="term" value="C:glycinergic synapse"/>
    <property type="evidence" value="ECO:0000314"/>
    <property type="project" value="SynGO"/>
</dbReference>
<dbReference type="GO" id="GO:0016020">
    <property type="term" value="C:membrane"/>
    <property type="evidence" value="ECO:0000314"/>
    <property type="project" value="MGI"/>
</dbReference>
<dbReference type="GO" id="GO:0005886">
    <property type="term" value="C:plasma membrane"/>
    <property type="evidence" value="ECO:0000250"/>
    <property type="project" value="UniProtKB"/>
</dbReference>
<dbReference type="GO" id="GO:0045211">
    <property type="term" value="C:postsynaptic membrane"/>
    <property type="evidence" value="ECO:0007669"/>
    <property type="project" value="UniProtKB-SubCell"/>
</dbReference>
<dbReference type="GO" id="GO:0099572">
    <property type="term" value="C:postsynaptic specialization"/>
    <property type="evidence" value="ECO:0007669"/>
    <property type="project" value="Ensembl"/>
</dbReference>
<dbReference type="GO" id="GO:0016934">
    <property type="term" value="F:extracellularly glycine-gated chloride channel activity"/>
    <property type="evidence" value="ECO:0000315"/>
    <property type="project" value="MGI"/>
</dbReference>
<dbReference type="GO" id="GO:0016933">
    <property type="term" value="F:extracellularly glycine-gated ion channel activity"/>
    <property type="evidence" value="ECO:0000250"/>
    <property type="project" value="UniProtKB"/>
</dbReference>
<dbReference type="GO" id="GO:0016594">
    <property type="term" value="F:glycine binding"/>
    <property type="evidence" value="ECO:0000315"/>
    <property type="project" value="MGI"/>
</dbReference>
<dbReference type="GO" id="GO:0044877">
    <property type="term" value="F:protein-containing complex binding"/>
    <property type="evidence" value="ECO:0007669"/>
    <property type="project" value="Ensembl"/>
</dbReference>
<dbReference type="GO" id="GO:0004888">
    <property type="term" value="F:transmembrane signaling receptor activity"/>
    <property type="evidence" value="ECO:0007669"/>
    <property type="project" value="InterPro"/>
</dbReference>
<dbReference type="GO" id="GO:1904315">
    <property type="term" value="F:transmitter-gated monoatomic ion channel activity involved in regulation of postsynaptic membrane potential"/>
    <property type="evidence" value="ECO:0000314"/>
    <property type="project" value="SynGO"/>
</dbReference>
<dbReference type="GO" id="GO:0007340">
    <property type="term" value="P:acrosome reaction"/>
    <property type="evidence" value="ECO:0000315"/>
    <property type="project" value="MGI"/>
</dbReference>
<dbReference type="GO" id="GO:0007628">
    <property type="term" value="P:adult walking behavior"/>
    <property type="evidence" value="ECO:0000315"/>
    <property type="project" value="MGI"/>
</dbReference>
<dbReference type="GO" id="GO:0007268">
    <property type="term" value="P:chemical synaptic transmission"/>
    <property type="evidence" value="ECO:0000250"/>
    <property type="project" value="UniProtKB"/>
</dbReference>
<dbReference type="GO" id="GO:1902476">
    <property type="term" value="P:chloride transmembrane transport"/>
    <property type="evidence" value="ECO:0000250"/>
    <property type="project" value="UniProtKB"/>
</dbReference>
<dbReference type="GO" id="GO:0097112">
    <property type="term" value="P:gamma-aminobutyric acid receptor clustering"/>
    <property type="evidence" value="ECO:0000316"/>
    <property type="project" value="MGI"/>
</dbReference>
<dbReference type="GO" id="GO:0006811">
    <property type="term" value="P:monoatomic ion transport"/>
    <property type="evidence" value="ECO:0000250"/>
    <property type="project" value="UniProtKB"/>
</dbReference>
<dbReference type="GO" id="GO:0007399">
    <property type="term" value="P:nervous system development"/>
    <property type="evidence" value="ECO:0000250"/>
    <property type="project" value="UniProtKB"/>
</dbReference>
<dbReference type="GO" id="GO:0050905">
    <property type="term" value="P:neuromuscular process"/>
    <property type="evidence" value="ECO:0000315"/>
    <property type="project" value="MGI"/>
</dbReference>
<dbReference type="GO" id="GO:0007218">
    <property type="term" value="P:neuropeptide signaling pathway"/>
    <property type="evidence" value="ECO:0000250"/>
    <property type="project" value="UniProtKB"/>
</dbReference>
<dbReference type="GO" id="GO:0042391">
    <property type="term" value="P:regulation of membrane potential"/>
    <property type="evidence" value="ECO:0000315"/>
    <property type="project" value="MGI"/>
</dbReference>
<dbReference type="GO" id="GO:0060013">
    <property type="term" value="P:righting reflex"/>
    <property type="evidence" value="ECO:0000315"/>
    <property type="project" value="MGI"/>
</dbReference>
<dbReference type="GO" id="GO:0001964">
    <property type="term" value="P:startle response"/>
    <property type="evidence" value="ECO:0000250"/>
    <property type="project" value="UniProtKB"/>
</dbReference>
<dbReference type="GO" id="GO:0060012">
    <property type="term" value="P:synaptic transmission, glycinergic"/>
    <property type="evidence" value="ECO:0000315"/>
    <property type="project" value="MGI"/>
</dbReference>
<dbReference type="GO" id="GO:0007601">
    <property type="term" value="P:visual perception"/>
    <property type="evidence" value="ECO:0000315"/>
    <property type="project" value="MGI"/>
</dbReference>
<dbReference type="CDD" id="cd19010">
    <property type="entry name" value="LGIC_ECD_GlyR_beta"/>
    <property type="match status" value="1"/>
</dbReference>
<dbReference type="CDD" id="cd19061">
    <property type="entry name" value="LGIC_TM_GlyR_beta"/>
    <property type="match status" value="1"/>
</dbReference>
<dbReference type="FunFam" id="1.20.58.390:FF:000070">
    <property type="entry name" value="Glycine receptor beta"/>
    <property type="match status" value="1"/>
</dbReference>
<dbReference type="FunFam" id="2.70.170.10:FF:000014">
    <property type="entry name" value="Glycine receptor subunit beta"/>
    <property type="match status" value="1"/>
</dbReference>
<dbReference type="Gene3D" id="2.70.170.10">
    <property type="entry name" value="Neurotransmitter-gated ion-channel ligand-binding domain"/>
    <property type="match status" value="1"/>
</dbReference>
<dbReference type="Gene3D" id="1.20.58.390">
    <property type="entry name" value="Neurotransmitter-gated ion-channel transmembrane domain"/>
    <property type="match status" value="1"/>
</dbReference>
<dbReference type="InterPro" id="IPR008060">
    <property type="entry name" value="Glycine_rcpt_B"/>
</dbReference>
<dbReference type="InterPro" id="IPR047031">
    <property type="entry name" value="GlyR_beta__ECD"/>
</dbReference>
<dbReference type="InterPro" id="IPR047029">
    <property type="entry name" value="GlyR_beta_TM"/>
</dbReference>
<dbReference type="InterPro" id="IPR006202">
    <property type="entry name" value="Neur_chan_lig-bd"/>
</dbReference>
<dbReference type="InterPro" id="IPR036734">
    <property type="entry name" value="Neur_chan_lig-bd_sf"/>
</dbReference>
<dbReference type="InterPro" id="IPR006201">
    <property type="entry name" value="Neur_channel"/>
</dbReference>
<dbReference type="InterPro" id="IPR036719">
    <property type="entry name" value="Neuro-gated_channel_TM_sf"/>
</dbReference>
<dbReference type="InterPro" id="IPR038050">
    <property type="entry name" value="Neuro_actylchol_rec"/>
</dbReference>
<dbReference type="InterPro" id="IPR006029">
    <property type="entry name" value="Neurotrans-gated_channel_TM"/>
</dbReference>
<dbReference type="InterPro" id="IPR018000">
    <property type="entry name" value="Neurotransmitter_ion_chnl_CS"/>
</dbReference>
<dbReference type="NCBIfam" id="TIGR00860">
    <property type="entry name" value="LIC"/>
    <property type="match status" value="1"/>
</dbReference>
<dbReference type="PANTHER" id="PTHR18945">
    <property type="entry name" value="NEUROTRANSMITTER GATED ION CHANNEL"/>
    <property type="match status" value="1"/>
</dbReference>
<dbReference type="Pfam" id="PF02931">
    <property type="entry name" value="Neur_chan_LBD"/>
    <property type="match status" value="1"/>
</dbReference>
<dbReference type="Pfam" id="PF02932">
    <property type="entry name" value="Neur_chan_memb"/>
    <property type="match status" value="1"/>
</dbReference>
<dbReference type="PRINTS" id="PR01677">
    <property type="entry name" value="GLYRBETA"/>
</dbReference>
<dbReference type="PRINTS" id="PR00252">
    <property type="entry name" value="NRIONCHANNEL"/>
</dbReference>
<dbReference type="SUPFAM" id="SSF90112">
    <property type="entry name" value="Neurotransmitter-gated ion-channel transmembrane pore"/>
    <property type="match status" value="1"/>
</dbReference>
<dbReference type="SUPFAM" id="SSF63712">
    <property type="entry name" value="Nicotinic receptor ligand binding domain-like"/>
    <property type="match status" value="1"/>
</dbReference>
<dbReference type="PROSITE" id="PS00236">
    <property type="entry name" value="NEUROTR_ION_CHANNEL"/>
    <property type="match status" value="1"/>
</dbReference>
<organism>
    <name type="scientific">Mus musculus</name>
    <name type="common">Mouse</name>
    <dbReference type="NCBI Taxonomy" id="10090"/>
    <lineage>
        <taxon>Eukaryota</taxon>
        <taxon>Metazoa</taxon>
        <taxon>Chordata</taxon>
        <taxon>Craniata</taxon>
        <taxon>Vertebrata</taxon>
        <taxon>Euteleostomi</taxon>
        <taxon>Mammalia</taxon>
        <taxon>Eutheria</taxon>
        <taxon>Euarchontoglires</taxon>
        <taxon>Glires</taxon>
        <taxon>Rodentia</taxon>
        <taxon>Myomorpha</taxon>
        <taxon>Muroidea</taxon>
        <taxon>Muridae</taxon>
        <taxon>Murinae</taxon>
        <taxon>Mus</taxon>
        <taxon>Mus</taxon>
    </lineage>
</organism>
<gene>
    <name type="primary">Glrb</name>
</gene>
<feature type="signal peptide" evidence="1">
    <location>
        <begin position="1"/>
        <end position="22"/>
    </location>
</feature>
<feature type="chain" id="PRO_0000000424" description="Glycine receptor subunit beta">
    <location>
        <begin position="23"/>
        <end position="496"/>
    </location>
</feature>
<feature type="topological domain" description="Extracellular" evidence="4">
    <location>
        <begin position="23"/>
        <end position="268"/>
    </location>
</feature>
<feature type="transmembrane region" description="Helical; Name=1" evidence="4">
    <location>
        <begin position="269"/>
        <end position="289"/>
    </location>
</feature>
<feature type="topological domain" description="Cytoplasmic" evidence="4">
    <location>
        <begin position="290"/>
        <end position="294"/>
    </location>
</feature>
<feature type="transmembrane region" description="Helical; Name=2" evidence="4">
    <location>
        <begin position="295"/>
        <end position="315"/>
    </location>
</feature>
<feature type="topological domain" description="Extracellular" evidence="4">
    <location>
        <begin position="316"/>
        <end position="327"/>
    </location>
</feature>
<feature type="transmembrane region" description="Helical; Name=3" evidence="4">
    <location>
        <begin position="328"/>
        <end position="349"/>
    </location>
</feature>
<feature type="topological domain" description="Cytoplasmic" evidence="4">
    <location>
        <begin position="350"/>
        <end position="471"/>
    </location>
</feature>
<feature type="transmembrane region" description="Helical; Name=4" evidence="4">
    <location>
        <begin position="472"/>
        <end position="495"/>
    </location>
</feature>
<feature type="topological domain" description="Extracellular" evidence="4">
    <location>
        <position position="496"/>
    </location>
</feature>
<feature type="region of interest" description="Disordered" evidence="6">
    <location>
        <begin position="32"/>
        <end position="53"/>
    </location>
</feature>
<feature type="binding site" evidence="4">
    <location>
        <position position="108"/>
    </location>
    <ligand>
        <name>glycine</name>
        <dbReference type="ChEBI" id="CHEBI:57305"/>
        <label>1</label>
        <note>agonist; ligand shared with an adjacent GLRA1 subunit or GLRA2 subunit</note>
    </ligand>
</feature>
<feature type="binding site" evidence="4">
    <location>
        <position position="174"/>
    </location>
    <ligand>
        <name>glycine</name>
        <dbReference type="ChEBI" id="CHEBI:57305"/>
        <label>1</label>
        <note>agonist; ligand shared with an adjacent GLRA1 subunit or GLRA2 subunit</note>
    </ligand>
</feature>
<feature type="binding site" evidence="4">
    <location>
        <position position="250"/>
    </location>
    <ligand>
        <name>glycine</name>
        <dbReference type="ChEBI" id="CHEBI:57305"/>
        <label>2</label>
        <note>agonist; ligand shared with an adjacent GLRA2 subunit</note>
    </ligand>
</feature>
<feature type="site" description="Important for obstruction of the ion pore in the closed conformation" evidence="3">
    <location>
        <position position="307"/>
    </location>
</feature>
<feature type="modified residue" description="Phosphothreonine" evidence="2">
    <location>
        <position position="391"/>
    </location>
</feature>
<feature type="glycosylation site" description="N-linked (GlcNAc...) asparagine" evidence="5">
    <location>
        <position position="54"/>
    </location>
</feature>
<feature type="glycosylation site" description="N-linked (GlcNAc...) asparagine" evidence="5">
    <location>
        <position position="242"/>
    </location>
</feature>
<feature type="disulfide bond" evidence="3">
    <location>
        <begin position="183"/>
        <end position="197"/>
    </location>
</feature>
<feature type="disulfide bond" evidence="3">
    <location>
        <begin position="243"/>
        <end position="255"/>
    </location>
</feature>
<feature type="sequence variant" description="In spastic 1." evidence="12">
    <original>NFKGIPVDVV</original>
    <variation>TTMLDIQPMI</variation>
    <location>
        <begin position="74"/>
        <end position="83"/>
    </location>
</feature>
<feature type="sequence variant" description="In spastic 1." evidence="12">
    <location>
        <begin position="84"/>
        <end position="496"/>
    </location>
</feature>
<feature type="sequence variant" description="In spastic 2." evidence="12">
    <original>LFFANEKSA</original>
    <variation>VSMSWIYNR</variation>
    <location>
        <begin position="143"/>
        <end position="151"/>
    </location>
</feature>
<feature type="sequence variant" description="In spastic 2." evidence="12">
    <location>
        <begin position="152"/>
        <end position="496"/>
    </location>
</feature>
<feature type="sequence conflict" description="In Ref. 1; AAA61874." evidence="13" ref="1">
    <original>A</original>
    <variation>R</variation>
    <location>
        <position position="365"/>
    </location>
</feature>
<evidence type="ECO:0000250" key="1"/>
<evidence type="ECO:0000250" key="2">
    <source>
        <dbReference type="UniProtKB" id="P20781"/>
    </source>
</evidence>
<evidence type="ECO:0000250" key="3">
    <source>
        <dbReference type="UniProtKB" id="P23415"/>
    </source>
</evidence>
<evidence type="ECO:0000250" key="4">
    <source>
        <dbReference type="UniProtKB" id="P48167"/>
    </source>
</evidence>
<evidence type="ECO:0000255" key="5"/>
<evidence type="ECO:0000256" key="6">
    <source>
        <dbReference type="SAM" id="MobiDB-lite"/>
    </source>
</evidence>
<evidence type="ECO:0000269" key="7">
    <source>
    </source>
</evidence>
<evidence type="ECO:0000269" key="8">
    <source>
    </source>
</evidence>
<evidence type="ECO:0000269" key="9">
    <source>
    </source>
</evidence>
<evidence type="ECO:0000269" key="10">
    <source>
    </source>
</evidence>
<evidence type="ECO:0000269" key="11">
    <source>
    </source>
</evidence>
<evidence type="ECO:0000269" key="12">
    <source>
    </source>
</evidence>
<evidence type="ECO:0000305" key="13"/>
<sequence>MKFSLAISFFILMSLLFEDACAKEKSSKKGKGKKKQYLCPSQQSPEDLARVPPNSTSNILNRLLVSYDPRIRPNFKGIPVDVVVNIFINSFGSIQETTMDYRVNIFLRQKWNDPRLKLPSDFRGSDALTVDPTMYKCLWKPDLFFANEKSANFHDVTQENILLFIFRDGDVLVSMRLSITLSCPLDLTLFPMDTQRCKMQLESFGYTTDDLRFIWQSGDPVQLEKIALPQFDIKKEDIEYGNCTKYYKGTGYYTCVEVIFTLRRQVGFYMMGVYAPTLLIVVLSWLSFWINPDASAARVPLGIFSVLSLASECTTLAAELPKVSYVKALDVWLIACLLFGFASLVEYAVVQVMLNNPKRVEAEKARIAKAEQADGKGGNAAKKNTVNGTGTPVHISTLQVGETRCKKVCTSKSDLRSNDFSIVGSLPRDFELSNYDCYGKPIEVNNGLGKPQAKNKKPPPAKPVIPTAAKRIDLYARALFPFCFLFFNVIYWSIYL</sequence>
<name>GLRB_MOUSE</name>